<keyword id="KW-0066">ATP synthesis</keyword>
<keyword id="KW-0997">Cell inner membrane</keyword>
<keyword id="KW-1003">Cell membrane</keyword>
<keyword id="KW-0139">CF(1)</keyword>
<keyword id="KW-0375">Hydrogen ion transport</keyword>
<keyword id="KW-0406">Ion transport</keyword>
<keyword id="KW-0472">Membrane</keyword>
<keyword id="KW-0813">Transport</keyword>
<organism>
    <name type="scientific">Vibrio parahaemolyticus serotype O3:K6 (strain RIMD 2210633)</name>
    <dbReference type="NCBI Taxonomy" id="223926"/>
    <lineage>
        <taxon>Bacteria</taxon>
        <taxon>Pseudomonadati</taxon>
        <taxon>Pseudomonadota</taxon>
        <taxon>Gammaproteobacteria</taxon>
        <taxon>Vibrionales</taxon>
        <taxon>Vibrionaceae</taxon>
        <taxon>Vibrio</taxon>
    </lineage>
</organism>
<reference key="1">
    <citation type="journal article" date="2003" name="Lancet">
        <title>Genome sequence of Vibrio parahaemolyticus: a pathogenic mechanism distinct from that of V. cholerae.</title>
        <authorList>
            <person name="Makino K."/>
            <person name="Oshima K."/>
            <person name="Kurokawa K."/>
            <person name="Yokoyama K."/>
            <person name="Uda T."/>
            <person name="Tagomori K."/>
            <person name="Iijima Y."/>
            <person name="Najima M."/>
            <person name="Nakano M."/>
            <person name="Yamashita A."/>
            <person name="Kubota Y."/>
            <person name="Kimura S."/>
            <person name="Yasunaga T."/>
            <person name="Honda T."/>
            <person name="Shinagawa H."/>
            <person name="Hattori M."/>
            <person name="Iida T."/>
        </authorList>
    </citation>
    <scope>NUCLEOTIDE SEQUENCE [LARGE SCALE GENOMIC DNA]</scope>
    <source>
        <strain>RIMD 2210633</strain>
    </source>
</reference>
<sequence length="288" mass="31860">MAGAKEIRNKIGSVKSTQKITKAMEMVAASKMRRSQDAMEASRPYAETMRKVIGHVANANLEYRHPYLEEREAKRVGYIIVSTDRGLCGGLNINVFKKAVTDIQTWKEKGAEIELAVIGSKATAFFKHGGAKVAAQVSGLGDSPSLEDLIGSVGVMLKKYDEGELDRLYVVFNKFVNTMVQQPTIDQLLPLPKSDSKEMQREHSWDYIYEPEPKPLLDTLLVRYVESQVYQGVVENLACEQAARMIAMKAATDNATNLIEDLELVYNKARQAAITQELSEIVGGASAV</sequence>
<accession>Q87KA7</accession>
<protein>
    <recommendedName>
        <fullName evidence="1">ATP synthase gamma chain</fullName>
    </recommendedName>
    <alternativeName>
        <fullName evidence="1">ATP synthase F1 sector gamma subunit</fullName>
    </alternativeName>
    <alternativeName>
        <fullName evidence="1">F-ATPase gamma subunit</fullName>
    </alternativeName>
</protein>
<name>ATPG_VIBPA</name>
<comment type="function">
    <text evidence="1">Produces ATP from ADP in the presence of a proton gradient across the membrane. The gamma chain is believed to be important in regulating ATPase activity and the flow of protons through the CF(0) complex.</text>
</comment>
<comment type="subunit">
    <text evidence="1">F-type ATPases have 2 components, CF(1) - the catalytic core - and CF(0) - the membrane proton channel. CF(1) has five subunits: alpha(3), beta(3), gamma(1), delta(1), epsilon(1). CF(0) has three main subunits: a, b and c.</text>
</comment>
<comment type="subcellular location">
    <subcellularLocation>
        <location evidence="1">Cell inner membrane</location>
        <topology evidence="1">Peripheral membrane protein</topology>
    </subcellularLocation>
</comment>
<comment type="similarity">
    <text evidence="1">Belongs to the ATPase gamma chain family.</text>
</comment>
<proteinExistence type="inferred from homology"/>
<dbReference type="EMBL" id="BA000031">
    <property type="protein sequence ID" value="BAC61333.1"/>
    <property type="molecule type" value="Genomic_DNA"/>
</dbReference>
<dbReference type="RefSeq" id="NP_799449.1">
    <property type="nucleotide sequence ID" value="NC_004603.1"/>
</dbReference>
<dbReference type="RefSeq" id="WP_005457304.1">
    <property type="nucleotide sequence ID" value="NC_004603.1"/>
</dbReference>
<dbReference type="SMR" id="Q87KA7"/>
<dbReference type="GeneID" id="1190669"/>
<dbReference type="KEGG" id="vpa:VP3070"/>
<dbReference type="PATRIC" id="fig|223926.6.peg.2956"/>
<dbReference type="eggNOG" id="COG0224">
    <property type="taxonomic scope" value="Bacteria"/>
</dbReference>
<dbReference type="HOGENOM" id="CLU_050669_0_1_6"/>
<dbReference type="Proteomes" id="UP000002493">
    <property type="component" value="Chromosome 1"/>
</dbReference>
<dbReference type="GO" id="GO:0005886">
    <property type="term" value="C:plasma membrane"/>
    <property type="evidence" value="ECO:0007669"/>
    <property type="project" value="UniProtKB-SubCell"/>
</dbReference>
<dbReference type="GO" id="GO:0045259">
    <property type="term" value="C:proton-transporting ATP synthase complex"/>
    <property type="evidence" value="ECO:0007669"/>
    <property type="project" value="UniProtKB-KW"/>
</dbReference>
<dbReference type="GO" id="GO:0005524">
    <property type="term" value="F:ATP binding"/>
    <property type="evidence" value="ECO:0007669"/>
    <property type="project" value="UniProtKB-UniRule"/>
</dbReference>
<dbReference type="GO" id="GO:0046933">
    <property type="term" value="F:proton-transporting ATP synthase activity, rotational mechanism"/>
    <property type="evidence" value="ECO:0007669"/>
    <property type="project" value="UniProtKB-UniRule"/>
</dbReference>
<dbReference type="GO" id="GO:0042777">
    <property type="term" value="P:proton motive force-driven plasma membrane ATP synthesis"/>
    <property type="evidence" value="ECO:0007669"/>
    <property type="project" value="UniProtKB-UniRule"/>
</dbReference>
<dbReference type="CDD" id="cd12151">
    <property type="entry name" value="F1-ATPase_gamma"/>
    <property type="match status" value="1"/>
</dbReference>
<dbReference type="FunFam" id="1.10.287.80:FF:000005">
    <property type="entry name" value="ATP synthase gamma chain"/>
    <property type="match status" value="2"/>
</dbReference>
<dbReference type="FunFam" id="3.40.1380.10:FF:000001">
    <property type="entry name" value="ATP synthase gamma chain"/>
    <property type="match status" value="1"/>
</dbReference>
<dbReference type="Gene3D" id="3.40.1380.10">
    <property type="match status" value="1"/>
</dbReference>
<dbReference type="Gene3D" id="1.10.287.80">
    <property type="entry name" value="ATP synthase, gamma subunit, helix hairpin domain"/>
    <property type="match status" value="1"/>
</dbReference>
<dbReference type="HAMAP" id="MF_00815">
    <property type="entry name" value="ATP_synth_gamma_bact"/>
    <property type="match status" value="1"/>
</dbReference>
<dbReference type="InterPro" id="IPR035968">
    <property type="entry name" value="ATP_synth_F1_ATPase_gsu"/>
</dbReference>
<dbReference type="InterPro" id="IPR000131">
    <property type="entry name" value="ATP_synth_F1_gsu"/>
</dbReference>
<dbReference type="InterPro" id="IPR023632">
    <property type="entry name" value="ATP_synth_F1_gsu_CS"/>
</dbReference>
<dbReference type="NCBIfam" id="TIGR01146">
    <property type="entry name" value="ATPsyn_F1gamma"/>
    <property type="match status" value="1"/>
</dbReference>
<dbReference type="NCBIfam" id="NF004144">
    <property type="entry name" value="PRK05621.1-1"/>
    <property type="match status" value="1"/>
</dbReference>
<dbReference type="PANTHER" id="PTHR11693">
    <property type="entry name" value="ATP SYNTHASE GAMMA CHAIN"/>
    <property type="match status" value="1"/>
</dbReference>
<dbReference type="PANTHER" id="PTHR11693:SF22">
    <property type="entry name" value="ATP SYNTHASE SUBUNIT GAMMA, MITOCHONDRIAL"/>
    <property type="match status" value="1"/>
</dbReference>
<dbReference type="Pfam" id="PF00231">
    <property type="entry name" value="ATP-synt"/>
    <property type="match status" value="1"/>
</dbReference>
<dbReference type="PRINTS" id="PR00126">
    <property type="entry name" value="ATPASEGAMMA"/>
</dbReference>
<dbReference type="SUPFAM" id="SSF52943">
    <property type="entry name" value="ATP synthase (F1-ATPase), gamma subunit"/>
    <property type="match status" value="1"/>
</dbReference>
<dbReference type="PROSITE" id="PS00153">
    <property type="entry name" value="ATPASE_GAMMA"/>
    <property type="match status" value="1"/>
</dbReference>
<gene>
    <name evidence="1" type="primary">atpG</name>
    <name type="ordered locus">VP3070</name>
</gene>
<feature type="chain" id="PRO_0000073413" description="ATP synthase gamma chain">
    <location>
        <begin position="1"/>
        <end position="288"/>
    </location>
</feature>
<evidence type="ECO:0000255" key="1">
    <source>
        <dbReference type="HAMAP-Rule" id="MF_00815"/>
    </source>
</evidence>